<reference key="1">
    <citation type="journal article" date="2005" name="Cell">
        <title>Dietary and genetic control of glucose transporter 2 glycosylation promotes insulin secretion in suppressing diabetes.</title>
        <authorList>
            <person name="Ohtsubo K."/>
            <person name="Takamatsu S."/>
            <person name="Minowa M.T."/>
            <person name="Yoshida A."/>
            <person name="Takeuchi M."/>
            <person name="Marth J.D."/>
        </authorList>
    </citation>
    <scope>NUCLEOTIDE SEQUENCE [GENOMIC DNA / MRNA] (ISOFORM 1)</scope>
    <scope>FUNCTION</scope>
    <scope>DISRUPTION PHENOTYPE</scope>
    <scope>CATALYTIC ACTIVITY</scope>
    <scope>PATHWAY</scope>
    <source>
        <strain>129/SvJ</strain>
    </source>
</reference>
<reference key="2">
    <citation type="journal article" date="2005" name="Science">
        <title>The transcriptional landscape of the mammalian genome.</title>
        <authorList>
            <person name="Carninci P."/>
            <person name="Kasukawa T."/>
            <person name="Katayama S."/>
            <person name="Gough J."/>
            <person name="Frith M.C."/>
            <person name="Maeda N."/>
            <person name="Oyama R."/>
            <person name="Ravasi T."/>
            <person name="Lenhard B."/>
            <person name="Wells C."/>
            <person name="Kodzius R."/>
            <person name="Shimokawa K."/>
            <person name="Bajic V.B."/>
            <person name="Brenner S.E."/>
            <person name="Batalov S."/>
            <person name="Forrest A.R."/>
            <person name="Zavolan M."/>
            <person name="Davis M.J."/>
            <person name="Wilming L.G."/>
            <person name="Aidinis V."/>
            <person name="Allen J.E."/>
            <person name="Ambesi-Impiombato A."/>
            <person name="Apweiler R."/>
            <person name="Aturaliya R.N."/>
            <person name="Bailey T.L."/>
            <person name="Bansal M."/>
            <person name="Baxter L."/>
            <person name="Beisel K.W."/>
            <person name="Bersano T."/>
            <person name="Bono H."/>
            <person name="Chalk A.M."/>
            <person name="Chiu K.P."/>
            <person name="Choudhary V."/>
            <person name="Christoffels A."/>
            <person name="Clutterbuck D.R."/>
            <person name="Crowe M.L."/>
            <person name="Dalla E."/>
            <person name="Dalrymple B.P."/>
            <person name="de Bono B."/>
            <person name="Della Gatta G."/>
            <person name="di Bernardo D."/>
            <person name="Down T."/>
            <person name="Engstrom P."/>
            <person name="Fagiolini M."/>
            <person name="Faulkner G."/>
            <person name="Fletcher C.F."/>
            <person name="Fukushima T."/>
            <person name="Furuno M."/>
            <person name="Futaki S."/>
            <person name="Gariboldi M."/>
            <person name="Georgii-Hemming P."/>
            <person name="Gingeras T.R."/>
            <person name="Gojobori T."/>
            <person name="Green R.E."/>
            <person name="Gustincich S."/>
            <person name="Harbers M."/>
            <person name="Hayashi Y."/>
            <person name="Hensch T.K."/>
            <person name="Hirokawa N."/>
            <person name="Hill D."/>
            <person name="Huminiecki L."/>
            <person name="Iacono M."/>
            <person name="Ikeo K."/>
            <person name="Iwama A."/>
            <person name="Ishikawa T."/>
            <person name="Jakt M."/>
            <person name="Kanapin A."/>
            <person name="Katoh M."/>
            <person name="Kawasawa Y."/>
            <person name="Kelso J."/>
            <person name="Kitamura H."/>
            <person name="Kitano H."/>
            <person name="Kollias G."/>
            <person name="Krishnan S.P."/>
            <person name="Kruger A."/>
            <person name="Kummerfeld S.K."/>
            <person name="Kurochkin I.V."/>
            <person name="Lareau L.F."/>
            <person name="Lazarevic D."/>
            <person name="Lipovich L."/>
            <person name="Liu J."/>
            <person name="Liuni S."/>
            <person name="McWilliam S."/>
            <person name="Madan Babu M."/>
            <person name="Madera M."/>
            <person name="Marchionni L."/>
            <person name="Matsuda H."/>
            <person name="Matsuzawa S."/>
            <person name="Miki H."/>
            <person name="Mignone F."/>
            <person name="Miyake S."/>
            <person name="Morris K."/>
            <person name="Mottagui-Tabar S."/>
            <person name="Mulder N."/>
            <person name="Nakano N."/>
            <person name="Nakauchi H."/>
            <person name="Ng P."/>
            <person name="Nilsson R."/>
            <person name="Nishiguchi S."/>
            <person name="Nishikawa S."/>
            <person name="Nori F."/>
            <person name="Ohara O."/>
            <person name="Okazaki Y."/>
            <person name="Orlando V."/>
            <person name="Pang K.C."/>
            <person name="Pavan W.J."/>
            <person name="Pavesi G."/>
            <person name="Pesole G."/>
            <person name="Petrovsky N."/>
            <person name="Piazza S."/>
            <person name="Reed J."/>
            <person name="Reid J.F."/>
            <person name="Ring B.Z."/>
            <person name="Ringwald M."/>
            <person name="Rost B."/>
            <person name="Ruan Y."/>
            <person name="Salzberg S.L."/>
            <person name="Sandelin A."/>
            <person name="Schneider C."/>
            <person name="Schoenbach C."/>
            <person name="Sekiguchi K."/>
            <person name="Semple C.A."/>
            <person name="Seno S."/>
            <person name="Sessa L."/>
            <person name="Sheng Y."/>
            <person name="Shibata Y."/>
            <person name="Shimada H."/>
            <person name="Shimada K."/>
            <person name="Silva D."/>
            <person name="Sinclair B."/>
            <person name="Sperling S."/>
            <person name="Stupka E."/>
            <person name="Sugiura K."/>
            <person name="Sultana R."/>
            <person name="Takenaka Y."/>
            <person name="Taki K."/>
            <person name="Tammoja K."/>
            <person name="Tan S.L."/>
            <person name="Tang S."/>
            <person name="Taylor M.S."/>
            <person name="Tegner J."/>
            <person name="Teichmann S.A."/>
            <person name="Ueda H.R."/>
            <person name="van Nimwegen E."/>
            <person name="Verardo R."/>
            <person name="Wei C.L."/>
            <person name="Yagi K."/>
            <person name="Yamanishi H."/>
            <person name="Zabarovsky E."/>
            <person name="Zhu S."/>
            <person name="Zimmer A."/>
            <person name="Hide W."/>
            <person name="Bult C."/>
            <person name="Grimmond S.M."/>
            <person name="Teasdale R.D."/>
            <person name="Liu E.T."/>
            <person name="Brusic V."/>
            <person name="Quackenbush J."/>
            <person name="Wahlestedt C."/>
            <person name="Mattick J.S."/>
            <person name="Hume D.A."/>
            <person name="Kai C."/>
            <person name="Sasaki D."/>
            <person name="Tomaru Y."/>
            <person name="Fukuda S."/>
            <person name="Kanamori-Katayama M."/>
            <person name="Suzuki M."/>
            <person name="Aoki J."/>
            <person name="Arakawa T."/>
            <person name="Iida J."/>
            <person name="Imamura K."/>
            <person name="Itoh M."/>
            <person name="Kato T."/>
            <person name="Kawaji H."/>
            <person name="Kawagashira N."/>
            <person name="Kawashima T."/>
            <person name="Kojima M."/>
            <person name="Kondo S."/>
            <person name="Konno H."/>
            <person name="Nakano K."/>
            <person name="Ninomiya N."/>
            <person name="Nishio T."/>
            <person name="Okada M."/>
            <person name="Plessy C."/>
            <person name="Shibata K."/>
            <person name="Shiraki T."/>
            <person name="Suzuki S."/>
            <person name="Tagami M."/>
            <person name="Waki K."/>
            <person name="Watahiki A."/>
            <person name="Okamura-Oho Y."/>
            <person name="Suzuki H."/>
            <person name="Kawai J."/>
            <person name="Hayashizaki Y."/>
        </authorList>
    </citation>
    <scope>NUCLEOTIDE SEQUENCE [LARGE SCALE MRNA] (ISOFORM 2)</scope>
    <source>
        <strain>C57BL/6J</strain>
        <tissue>Egg</tissue>
    </source>
</reference>
<accession>Q812G0</accession>
<accession>Q3TQT1</accession>
<accession>Q80UI0</accession>
<comment type="function">
    <text evidence="5">Glycosyltransferase that catalyze the transfer of GlcNAc from UDP-GlcNAc to the GlcNAcbeta1-2Manalpha1-3 arm of the core structure of N-linked glycans through a beta1-4 linkage and participates in the production of tri- and tetra-antennary N-linked sugar chains (PubMed:16377570). Involved in glucose transport by mediating SLC2A2/GLUT2 glycosylation, thereby controlling cell-surface expression of SLC2A2 in pancreatic beta cells (PubMed:16377570).</text>
</comment>
<comment type="catalytic activity">
    <reaction evidence="5">
        <text>N(4)-{beta-D-GlcNAc-(1-&gt;2)-alpha-D-Man-(1-&gt;3)-[beta-D-GlcNAc-(1-&gt;2)-alpha-D-Man-(1-&gt;6)]-beta-D-Man-(1-&gt;4)-beta-D-GlcNAc-(1-&gt;4)-beta-D-GlcNAc}-L-asparaginyl-[protein] + UDP-N-acetyl-alpha-D-glucosamine = N(4)-{beta-D-GlcNAc-(1-&gt;2)-[beta-D-GlcNAc-(1-&gt;4)]-alpha-D-Man-(1-&gt;3)-[beta-D-GlcNAc-(1-&gt;2)-alpha-D-Man-(1-&gt;6)]-beta-D-Man-(1-&gt;4)-beta-D-GlcNAc-(1-&gt;4)-beta-D-GlcNAc}-L-asparaginyl-[protein] + UDP + H(+)</text>
        <dbReference type="Rhea" id="RHEA:16057"/>
        <dbReference type="Rhea" id="RHEA-COMP:13526"/>
        <dbReference type="Rhea" id="RHEA-COMP:14374"/>
        <dbReference type="ChEBI" id="CHEBI:15378"/>
        <dbReference type="ChEBI" id="CHEBI:57705"/>
        <dbReference type="ChEBI" id="CHEBI:58223"/>
        <dbReference type="ChEBI" id="CHEBI:60651"/>
        <dbReference type="ChEBI" id="CHEBI:139507"/>
        <dbReference type="EC" id="2.4.1.145"/>
    </reaction>
    <physiologicalReaction direction="left-to-right" evidence="8">
        <dbReference type="Rhea" id="RHEA:16058"/>
    </physiologicalReaction>
</comment>
<comment type="catalytic activity">
    <reaction evidence="3">
        <text>an N(4)-{beta-D-GlcNAc-(1-&gt;2)-alpha-D-Man-(1-&gt;3)-[alpha-D-Man-(1-&gt;6)]-beta-D-Man-(1-&gt;4)-beta-D-GlcNAc-(1-&gt;4)-beta-D-GlcNAc}-L-asparaginyl-[protein] + UDP-N-acetyl-alpha-D-glucosamine = an N(4)-{beta-D-GlcNAc-(1-&gt;2)-[beta-D-GlcNAc-(1-&gt;4)]-alpha-D-Man-(1-&gt;3)-[alpha-D-Man-(1-&gt;6)]-beta-D-Man-(1-&gt;4)-beta-D-GlcNAc-(1-&gt;4)-beta-D-GlcNAc}-L-asparaginyl-[protein] + UDP + H(+)</text>
        <dbReference type="Rhea" id="RHEA:69615"/>
        <dbReference type="Rhea" id="RHEA-COMP:14369"/>
        <dbReference type="Rhea" id="RHEA-COMP:17732"/>
        <dbReference type="ChEBI" id="CHEBI:15378"/>
        <dbReference type="ChEBI" id="CHEBI:57705"/>
        <dbReference type="ChEBI" id="CHEBI:58223"/>
        <dbReference type="ChEBI" id="CHEBI:60615"/>
        <dbReference type="ChEBI" id="CHEBI:187873"/>
    </reaction>
    <physiologicalReaction direction="left-to-right" evidence="3">
        <dbReference type="Rhea" id="RHEA:69616"/>
    </physiologicalReaction>
</comment>
<comment type="catalytic activity">
    <reaction evidence="3">
        <text>an N(4)-{beta-D-GlcNAc-(1-&gt;2)-alpha-D-Man-(1-&gt;3)-[beta-D-GlcNAc-(1-&gt;2)-[beta-D-GlcNAc-(1-&gt;6)]-alpha-D-Man-(1-&gt;6)]-beta-D-Man-(1-&gt;4)-beta-D-GlcNAc-(1-&gt;4)-beta-D-GlcNAc}-L-asparaginyl-[protein] + UDP-N-acetyl-alpha-D-glucosamine = an N(4)-{beta-D-GlcNAc-(1-&gt;2)-[beta-D-GlcNAc-(1-&gt;4)]-alpha-D-Man-(1-&gt;3)-[beta-D-GlcNAc-(1-&gt;2)-[beta-D-GlcNAc-(1-&gt;6)]-alpha-D-Man-(1-&gt;6)]-beta-D-Man-(1-&gt;4)-beta-D-GlcNAc-(1-&gt;4)-beta-D-GlcNAc}-L-asparaginyl-[protein] + UDP + H(+)</text>
        <dbReference type="Rhea" id="RHEA:69619"/>
        <dbReference type="Rhea" id="RHEA-COMP:17733"/>
        <dbReference type="Rhea" id="RHEA-COMP:17734"/>
        <dbReference type="ChEBI" id="CHEBI:15378"/>
        <dbReference type="ChEBI" id="CHEBI:57705"/>
        <dbReference type="ChEBI" id="CHEBI:58223"/>
        <dbReference type="ChEBI" id="CHEBI:187874"/>
        <dbReference type="ChEBI" id="CHEBI:187875"/>
    </reaction>
    <physiologicalReaction direction="left-to-right" evidence="3">
        <dbReference type="Rhea" id="RHEA:69620"/>
    </physiologicalReaction>
</comment>
<comment type="catalytic activity">
    <reaction evidence="3">
        <text>an N(4)-{beta-D-GlcNAc-(1-&gt;2)-alpha-D-Man-(1-&gt;3)-[beta-D-GlcNAc-(1-&gt;2)-alpha-D-Man-(1-&gt;6)]-beta-D-Man-(1-&gt;4)-beta-D-GlcNAc-(1-&gt;4)-[alpha-L-Fuc-(1-&gt;6)]-beta-D-GlcNAc}-L-asparaginyl-[protein] + UDP-N-acetyl-alpha-D-glucosamine = N(4)-{beta-D-GlcNAc-(1-&gt;2)-[beta-D-GlcNAc-(1-&gt;4)]-alpha-D-Man-(1-&gt;3)-[beta-D-GlcNAc-(1-&gt;2)-alpha-D-Man-(1-&gt;6)]-beta-D-Man-(1-&gt;4)-beta-D-GlcNAc-(1-&gt;4)-[alpha-L-Fuc-(1-&gt;6)]-beta-D-GlcNAc}-asparaginyl-[protein] + UDP + H(+)</text>
        <dbReference type="Rhea" id="RHEA:69623"/>
        <dbReference type="Rhea" id="RHEA-COMP:13532"/>
        <dbReference type="Rhea" id="RHEA-COMP:18198"/>
        <dbReference type="ChEBI" id="CHEBI:15378"/>
        <dbReference type="ChEBI" id="CHEBI:57705"/>
        <dbReference type="ChEBI" id="CHEBI:58223"/>
        <dbReference type="ChEBI" id="CHEBI:137207"/>
        <dbReference type="ChEBI" id="CHEBI:187877"/>
    </reaction>
    <physiologicalReaction direction="left-to-right" evidence="3">
        <dbReference type="Rhea" id="RHEA:69624"/>
    </physiologicalReaction>
</comment>
<comment type="catalytic activity">
    <reaction evidence="3">
        <text>an N(4)-{beta-D-GlcNAc-(1-&gt;2)-alpha-D-Man-(1-&gt;3)-[beta-D-Gal-(1-&gt;4)-beta-D-GlcNAc-(1-&gt;2)-alpha-D-Man-(1-&gt;6)]-beta-D-Man-(1-&gt;4)-beta-D-GlcNAc-(1-&gt;4)-beta-D-GlcNAc}-L-asparaginyl-[protein] + UDP-N-acetyl-alpha-D-glucosamine = an N(4)-{beta-D-GlcNAc-(1-&gt;2)-[beta-D-GlcNAc-(1-&gt;4)]-alpha-D-Man-(1-&gt;3)-[beta-D-Gal-(1-&gt;4)-beta-D-GlcNAc-(1-&gt;2)-alpha-D-Man-(1-&gt;6)]-beta-D-Man-(1-&gt;4)-beta-D-GlcNAc-(1-&gt;4)-beta-D-GlcNAc}-L-asparaginyl-[protein] + UDP + H(+)</text>
        <dbReference type="Rhea" id="RHEA:69627"/>
        <dbReference type="Rhea" id="RHEA-COMP:17737"/>
        <dbReference type="Rhea" id="RHEA-COMP:17738"/>
        <dbReference type="ChEBI" id="CHEBI:15378"/>
        <dbReference type="ChEBI" id="CHEBI:57705"/>
        <dbReference type="ChEBI" id="CHEBI:58223"/>
        <dbReference type="ChEBI" id="CHEBI:187878"/>
        <dbReference type="ChEBI" id="CHEBI:187879"/>
    </reaction>
    <physiologicalReaction direction="left-to-right" evidence="3">
        <dbReference type="Rhea" id="RHEA:69628"/>
    </physiologicalReaction>
</comment>
<comment type="catalytic activity">
    <reaction evidence="3">
        <text>N(4)-{beta-D-GlcNAc-(1-&gt;2)-alpha-D-Man-(1-&gt;3)-[alpha-D-Man-(1-&gt;3)-{alpha-D-Man-(1-&gt;6)}-alpha-D-Man-(1-&gt;6)]-beta-D-Man-(1-&gt;4)-beta-D-GlcNAc-(1-&gt;4)-beta-D-GlcNAc}-asparaginyl-[protein] + UDP-N-acetyl-alpha-D-glucosamine = N(4)-{beta-D-GlcNAc-(1-&gt;2)-[beta-D-GlcNAc-(1-&gt;4)]-alpha-D-Man-(1-&gt;3)-[alpha-D-Man-(1-&gt;3)-{alpha-D-Man-(1-&gt;6)}-alpha-D-Man-(1-&gt;6)]-beta-D-Man-(1-&gt;4)-beta-D-GlcNAc-(1-&gt;4)-beta-D-GlcNAc}-asparaginyl-[protein] + UDP + H(+)</text>
        <dbReference type="Rhea" id="RHEA:69631"/>
        <dbReference type="Rhea" id="RHEA-COMP:17739"/>
        <dbReference type="Rhea" id="RHEA-COMP:17740"/>
        <dbReference type="ChEBI" id="CHEBI:15378"/>
        <dbReference type="ChEBI" id="CHEBI:57705"/>
        <dbReference type="ChEBI" id="CHEBI:58223"/>
        <dbReference type="ChEBI" id="CHEBI:187880"/>
        <dbReference type="ChEBI" id="CHEBI:187881"/>
    </reaction>
    <physiologicalReaction direction="left-to-right" evidence="3">
        <dbReference type="Rhea" id="RHEA:69632"/>
    </physiologicalReaction>
</comment>
<comment type="catalytic activity">
    <reaction evidence="3">
        <text>N(4)-{beta-D-GlcNAc-(1-&gt;2)-alpha-D-Man-(1-&gt;3)-beta-D-Man-(1-&gt;4)-beta-D-GlcNAc-(1-&gt;4)-beta-D-GlcNAc}-asparaginyl-[protein] + UDP-N-acetyl-alpha-D-glucosamine = N(4)-{beta-D-GlcNAc-(1-&gt;2)-[beta-D-GlcNAc-(1-&gt;4)]-alpha-D-Man-(1-&gt;3)-beta-D-Man-(1-&gt;4)-beta-D-GlcNAc-(1-&gt;4)-beta-D-GlcNAc}-asparaginyl-[protein] + UDP + H(+)</text>
        <dbReference type="Rhea" id="RHEA:69635"/>
        <dbReference type="Rhea" id="RHEA-COMP:17741"/>
        <dbReference type="Rhea" id="RHEA-COMP:17742"/>
        <dbReference type="ChEBI" id="CHEBI:15378"/>
        <dbReference type="ChEBI" id="CHEBI:57705"/>
        <dbReference type="ChEBI" id="CHEBI:58223"/>
        <dbReference type="ChEBI" id="CHEBI:187882"/>
        <dbReference type="ChEBI" id="CHEBI:187883"/>
    </reaction>
    <physiologicalReaction direction="left-to-right" evidence="3">
        <dbReference type="Rhea" id="RHEA:69636"/>
    </physiologicalReaction>
</comment>
<comment type="cofactor">
    <cofactor evidence="1">
        <name>a divalent metal cation</name>
        <dbReference type="ChEBI" id="CHEBI:60240"/>
    </cofactor>
</comment>
<comment type="activity regulation">
    <text evidence="1">Inhibited by UDP.</text>
</comment>
<comment type="pathway">
    <text evidence="5">Protein modification; protein glycosylation.</text>
</comment>
<comment type="subcellular location">
    <subcellularLocation>
        <location evidence="2">Golgi apparatus membrane</location>
        <topology evidence="2">Single-pass type II membrane protein</topology>
    </subcellularLocation>
</comment>
<comment type="subcellular location">
    <molecule>Alpha-1,3-mannosyl-glycoprotein 4-beta-N-acetylglucosaminyltransferase A soluble form</molecule>
    <subcellularLocation>
        <location evidence="1">Secreted</location>
    </subcellularLocation>
</comment>
<comment type="alternative products">
    <event type="alternative splicing"/>
    <isoform>
        <id>Q812G0-1</id>
        <name>1</name>
        <sequence type="displayed"/>
    </isoform>
    <isoform>
        <id>Q812G0-2</id>
        <name>2</name>
        <sequence type="described" ref="VSP_025715"/>
    </isoform>
</comment>
<comment type="PTM">
    <text evidence="1">N-glycosylated.</text>
</comment>
<comment type="disruption phenotype">
    <text evidence="5">Mice display impaired beta cell glucose transport and insulin secretion causing type 2 diabete. This is due to defects in SLC2A2/Glut-2 glycosylation, provoking SLC2A2/Glut-2 endocytosis with redistribution into endosomes and lysosomes.</text>
</comment>
<comment type="similarity">
    <text evidence="7">Belongs to the glycosyltransferase 54 family.</text>
</comment>
<dbReference type="EC" id="2.4.1.145" evidence="5"/>
<dbReference type="EMBL" id="AB053217">
    <property type="protein sequence ID" value="BAC55018.1"/>
    <property type="molecule type" value="mRNA"/>
</dbReference>
<dbReference type="EMBL" id="AB053225">
    <property type="protein sequence ID" value="BAC55085.1"/>
    <property type="molecule type" value="Genomic_DNA"/>
</dbReference>
<dbReference type="EMBL" id="AK163327">
    <property type="protein sequence ID" value="BAE37301.1"/>
    <property type="molecule type" value="mRNA"/>
</dbReference>
<dbReference type="CCDS" id="CCDS14893.1">
    <molecule id="Q812G0-1"/>
</dbReference>
<dbReference type="CCDS" id="CCDS69882.1">
    <molecule id="Q812G0-2"/>
</dbReference>
<dbReference type="RefSeq" id="NP_001277730.1">
    <molecule id="Q812G0-2"/>
    <property type="nucleotide sequence ID" value="NM_001290801.1"/>
</dbReference>
<dbReference type="RefSeq" id="NP_776295.1">
    <molecule id="Q812G0-1"/>
    <property type="nucleotide sequence ID" value="NM_173870.3"/>
</dbReference>
<dbReference type="RefSeq" id="XP_006496085.1">
    <molecule id="Q812G0-1"/>
    <property type="nucleotide sequence ID" value="XM_006496022.5"/>
</dbReference>
<dbReference type="RefSeq" id="XP_011236828.1">
    <molecule id="Q812G0-2"/>
    <property type="nucleotide sequence ID" value="XM_011238526.3"/>
</dbReference>
<dbReference type="RefSeq" id="XP_036021335.1">
    <molecule id="Q812G0-1"/>
    <property type="nucleotide sequence ID" value="XM_036165442.1"/>
</dbReference>
<dbReference type="PDB" id="7VMT">
    <property type="method" value="X-ray"/>
    <property type="resolution" value="1.95 A"/>
    <property type="chains" value="A/B/C/D/E/F=391-535"/>
</dbReference>
<dbReference type="PDBsum" id="7VMT"/>
<dbReference type="SMR" id="Q812G0"/>
<dbReference type="FunCoup" id="Q812G0">
    <property type="interactions" value="1461"/>
</dbReference>
<dbReference type="STRING" id="10090.ENSMUSP00000114175"/>
<dbReference type="CAZy" id="GT54">
    <property type="family name" value="Glycosyltransferase Family 54"/>
</dbReference>
<dbReference type="GlyCosmos" id="Q812G0">
    <property type="glycosylation" value="2 sites, No reported glycans"/>
</dbReference>
<dbReference type="GlyGen" id="Q812G0">
    <property type="glycosylation" value="3 sites"/>
</dbReference>
<dbReference type="PhosphoSitePlus" id="Q812G0"/>
<dbReference type="jPOST" id="Q812G0"/>
<dbReference type="PaxDb" id="10090-ENSMUSP00000114175"/>
<dbReference type="ProteomicsDB" id="295659">
    <molecule id="Q812G0-1"/>
</dbReference>
<dbReference type="ProteomicsDB" id="295660">
    <molecule id="Q812G0-2"/>
</dbReference>
<dbReference type="Antibodypedia" id="32749">
    <property type="antibodies" value="92 antibodies from 23 providers"/>
</dbReference>
<dbReference type="DNASU" id="269181"/>
<dbReference type="Ensembl" id="ENSMUST00000042161.15">
    <molecule id="Q812G0-1"/>
    <property type="protein sequence ID" value="ENSMUSP00000038894.9"/>
    <property type="gene ID" value="ENSMUSG00000026110.16"/>
</dbReference>
<dbReference type="Ensembl" id="ENSMUST00000151952.8">
    <molecule id="Q812G0-1"/>
    <property type="protein sequence ID" value="ENSMUSP00000114175.2"/>
    <property type="gene ID" value="ENSMUSG00000026110.16"/>
</dbReference>
<dbReference type="Ensembl" id="ENSMUST00000154819.8">
    <molecule id="Q812G0-2"/>
    <property type="protein sequence ID" value="ENSMUSP00000121181.2"/>
    <property type="gene ID" value="ENSMUSG00000026110.16"/>
</dbReference>
<dbReference type="GeneID" id="269181"/>
<dbReference type="KEGG" id="mmu:269181"/>
<dbReference type="UCSC" id="uc007arr.2">
    <molecule id="Q812G0-1"/>
    <property type="organism name" value="mouse"/>
</dbReference>
<dbReference type="UCSC" id="uc007aru.2">
    <molecule id="Q812G0-2"/>
    <property type="organism name" value="mouse"/>
</dbReference>
<dbReference type="AGR" id="MGI:2662992"/>
<dbReference type="CTD" id="11320"/>
<dbReference type="MGI" id="MGI:2662992">
    <property type="gene designation" value="Mgat4a"/>
</dbReference>
<dbReference type="VEuPathDB" id="HostDB:ENSMUSG00000026110"/>
<dbReference type="eggNOG" id="ENOG502QPQJ">
    <property type="taxonomic scope" value="Eukaryota"/>
</dbReference>
<dbReference type="GeneTree" id="ENSGT00940000159177"/>
<dbReference type="InParanoid" id="Q812G0"/>
<dbReference type="OMA" id="KWVLINE"/>
<dbReference type="OrthoDB" id="2016523at2759"/>
<dbReference type="PhylomeDB" id="Q812G0"/>
<dbReference type="TreeFam" id="TF324570"/>
<dbReference type="Reactome" id="R-MMU-381426">
    <property type="pathway name" value="Regulation of Insulin-like Growth Factor (IGF) transport and uptake by Insulin-like Growth Factor Binding Proteins (IGFBPs)"/>
</dbReference>
<dbReference type="Reactome" id="R-MMU-8957275">
    <property type="pathway name" value="Post-translational protein phosphorylation"/>
</dbReference>
<dbReference type="Reactome" id="R-MMU-975577">
    <property type="pathway name" value="N-Glycan antennae elongation"/>
</dbReference>
<dbReference type="UniPathway" id="UPA00378"/>
<dbReference type="BioGRID-ORCS" id="269181">
    <property type="hits" value="2 hits in 76 CRISPR screens"/>
</dbReference>
<dbReference type="ChiTaRS" id="Mgat4a">
    <property type="organism name" value="mouse"/>
</dbReference>
<dbReference type="PRO" id="PR:Q812G0"/>
<dbReference type="Proteomes" id="UP000000589">
    <property type="component" value="Chromosome 1"/>
</dbReference>
<dbReference type="RNAct" id="Q812G0">
    <property type="molecule type" value="protein"/>
</dbReference>
<dbReference type="Bgee" id="ENSMUSG00000026110">
    <property type="expression patterns" value="Expressed in left colon and 208 other cell types or tissues"/>
</dbReference>
<dbReference type="ExpressionAtlas" id="Q812G0">
    <property type="expression patterns" value="baseline and differential"/>
</dbReference>
<dbReference type="GO" id="GO:0005576">
    <property type="term" value="C:extracellular region"/>
    <property type="evidence" value="ECO:0007669"/>
    <property type="project" value="UniProtKB-SubCell"/>
</dbReference>
<dbReference type="GO" id="GO:0000139">
    <property type="term" value="C:Golgi membrane"/>
    <property type="evidence" value="ECO:0007669"/>
    <property type="project" value="UniProtKB-SubCell"/>
</dbReference>
<dbReference type="GO" id="GO:0005777">
    <property type="term" value="C:peroxisome"/>
    <property type="evidence" value="ECO:0000250"/>
    <property type="project" value="UniProtKB"/>
</dbReference>
<dbReference type="GO" id="GO:0008375">
    <property type="term" value="F:acetylglucosaminyltransferase activity"/>
    <property type="evidence" value="ECO:0000314"/>
    <property type="project" value="MGI"/>
</dbReference>
<dbReference type="GO" id="GO:0008453">
    <property type="term" value="F:alanine-glyoxylate transaminase activity"/>
    <property type="evidence" value="ECO:0000250"/>
    <property type="project" value="UniProtKB"/>
</dbReference>
<dbReference type="GO" id="GO:0008454">
    <property type="term" value="F:alpha-1,3-mannosylglycoprotein 4-beta-N-acetylglucosaminyltransferase activity"/>
    <property type="evidence" value="ECO:0000314"/>
    <property type="project" value="UniProtKB"/>
</dbReference>
<dbReference type="GO" id="GO:0016757">
    <property type="term" value="F:glycosyltransferase activity"/>
    <property type="evidence" value="ECO:0000314"/>
    <property type="project" value="MGI"/>
</dbReference>
<dbReference type="GO" id="GO:0046872">
    <property type="term" value="F:metal ion binding"/>
    <property type="evidence" value="ECO:0007669"/>
    <property type="project" value="UniProtKB-KW"/>
</dbReference>
<dbReference type="GO" id="GO:0042803">
    <property type="term" value="F:protein homodimerization activity"/>
    <property type="evidence" value="ECO:0000250"/>
    <property type="project" value="UniProtKB"/>
</dbReference>
<dbReference type="GO" id="GO:0046487">
    <property type="term" value="P:glyoxylate metabolic process"/>
    <property type="evidence" value="ECO:0000250"/>
    <property type="project" value="UniProtKB"/>
</dbReference>
<dbReference type="GO" id="GO:0006491">
    <property type="term" value="P:N-glycan processing"/>
    <property type="evidence" value="ECO:0000314"/>
    <property type="project" value="UniProtKB"/>
</dbReference>
<dbReference type="GO" id="GO:0006487">
    <property type="term" value="P:protein N-linked glycosylation"/>
    <property type="evidence" value="ECO:0000316"/>
    <property type="project" value="MGI"/>
</dbReference>
<dbReference type="InterPro" id="IPR006759">
    <property type="entry name" value="Glyco_transf_54"/>
</dbReference>
<dbReference type="InterPro" id="IPR056576">
    <property type="entry name" value="MGAT4_A/B/C_C"/>
</dbReference>
<dbReference type="PANTHER" id="PTHR12062:SF4">
    <property type="entry name" value="ALPHA-1,3-MANNOSYL-GLYCOPROTEIN 4-BETA-N-ACETYLGLUCOSAMINYLTRANSFERASE A"/>
    <property type="match status" value="1"/>
</dbReference>
<dbReference type="PANTHER" id="PTHR12062">
    <property type="entry name" value="N-ACETYLGLUCOSAMINYLTRANSFERASE VI"/>
    <property type="match status" value="1"/>
</dbReference>
<dbReference type="Pfam" id="PF04666">
    <property type="entry name" value="MGAT4_cons"/>
    <property type="match status" value="1"/>
</dbReference>
<dbReference type="Pfam" id="PF23524">
    <property type="entry name" value="MGAT4A_C"/>
    <property type="match status" value="1"/>
</dbReference>
<keyword id="KW-0002">3D-structure</keyword>
<keyword id="KW-0025">Alternative splicing</keyword>
<keyword id="KW-0175">Coiled coil</keyword>
<keyword id="KW-0325">Glycoprotein</keyword>
<keyword id="KW-0328">Glycosyltransferase</keyword>
<keyword id="KW-0333">Golgi apparatus</keyword>
<keyword id="KW-0472">Membrane</keyword>
<keyword id="KW-0479">Metal-binding</keyword>
<keyword id="KW-0597">Phosphoprotein</keyword>
<keyword id="KW-1185">Reference proteome</keyword>
<keyword id="KW-0964">Secreted</keyword>
<keyword id="KW-0735">Signal-anchor</keyword>
<keyword id="KW-0808">Transferase</keyword>
<keyword id="KW-0812">Transmembrane</keyword>
<keyword id="KW-1133">Transmembrane helix</keyword>
<evidence type="ECO:0000250" key="1">
    <source>
        <dbReference type="UniProtKB" id="O77836"/>
    </source>
</evidence>
<evidence type="ECO:0000250" key="2">
    <source>
        <dbReference type="UniProtKB" id="Q9D4R2"/>
    </source>
</evidence>
<evidence type="ECO:0000250" key="3">
    <source>
        <dbReference type="UniProtKB" id="Q9UM21"/>
    </source>
</evidence>
<evidence type="ECO:0000255" key="4"/>
<evidence type="ECO:0000269" key="5">
    <source>
    </source>
</evidence>
<evidence type="ECO:0000303" key="6">
    <source>
    </source>
</evidence>
<evidence type="ECO:0000305" key="7"/>
<evidence type="ECO:0000305" key="8">
    <source>
    </source>
</evidence>
<evidence type="ECO:0000312" key="9">
    <source>
        <dbReference type="MGI" id="MGI:2662992"/>
    </source>
</evidence>
<evidence type="ECO:0007829" key="10">
    <source>
        <dbReference type="PDB" id="7VMT"/>
    </source>
</evidence>
<organism>
    <name type="scientific">Mus musculus</name>
    <name type="common">Mouse</name>
    <dbReference type="NCBI Taxonomy" id="10090"/>
    <lineage>
        <taxon>Eukaryota</taxon>
        <taxon>Metazoa</taxon>
        <taxon>Chordata</taxon>
        <taxon>Craniata</taxon>
        <taxon>Vertebrata</taxon>
        <taxon>Euteleostomi</taxon>
        <taxon>Mammalia</taxon>
        <taxon>Eutheria</taxon>
        <taxon>Euarchontoglires</taxon>
        <taxon>Glires</taxon>
        <taxon>Rodentia</taxon>
        <taxon>Myomorpha</taxon>
        <taxon>Muroidea</taxon>
        <taxon>Muridae</taxon>
        <taxon>Murinae</taxon>
        <taxon>Mus</taxon>
        <taxon>Mus</taxon>
    </lineage>
</organism>
<name>MGT4A_MOUSE</name>
<proteinExistence type="evidence at protein level"/>
<sequence length="535" mass="61480">MRLRNGTVATALVFVTSFLTLSWYTTWQNGKEKLIAYQREFLALKERLRVAEHRISQRSSELNTIVQQFRRAGAETNGSKTALSTISDNTIKLLKELTSKKSLRVPSIYYHLPHLLQNERSLQPAVQIGSGRTGVSIVMGIPTVKREVKSYLVETLHSLIDNLYPEEKLDCVIVVFIGETDLDYVHSVVANLEKEFSREISSGLLEIISPPESYYPDLTNLKETFGDSKERVRWRTKQNLDYCFLMMYAQEKGIYYIQLEDDIIVKQNYFNTIKNFALQLSSEEWMILEFSQLGFIGKMFQAPDLALVVEFILMFYKEKPIDWLLDHILWVKVCNPEKDAKHCDRQKANLRIRFRPSLFQHVGLHSSLSGKIQKLTDKDYMKPLLLKVHVNPPAEVSTSLKVYQGHTLEKTYMGEDFFWAITPTAGDYILFKFDKPVNVESYLFHSGNQEHPGDILLNTTVDVLPLKSDSLEISKETKDKRLEDGYFRIGKFEYGVAEGIVDPGLNPISAFRLSVIQNSAVWAILNEIHIKKVTS</sequence>
<gene>
    <name evidence="9" type="primary">Mgat4a</name>
</gene>
<feature type="chain" id="PRO_0000288585" description="Alpha-1,3-mannosyl-glycoprotein 4-beta-N-acetylglucosaminyltransferase A">
    <location>
        <begin position="1"/>
        <end position="535"/>
    </location>
</feature>
<feature type="chain" id="PRO_0000288586" description="Alpha-1,3-mannosyl-glycoprotein 4-beta-N-acetylglucosaminyltransferase A soluble form" evidence="1">
    <location>
        <begin position="93"/>
        <end position="535"/>
    </location>
</feature>
<feature type="topological domain" description="Cytoplasmic" evidence="4">
    <location>
        <begin position="1"/>
        <end position="6"/>
    </location>
</feature>
<feature type="transmembrane region" description="Helical; Signal-anchor for type II membrane protein" evidence="4">
    <location>
        <begin position="7"/>
        <end position="27"/>
    </location>
</feature>
<feature type="topological domain" description="Lumenal" evidence="4">
    <location>
        <begin position="28"/>
        <end position="535"/>
    </location>
</feature>
<feature type="coiled-coil region" evidence="4">
    <location>
        <begin position="28"/>
        <end position="63"/>
    </location>
</feature>
<feature type="modified residue" description="Phosphoserine" evidence="3">
    <location>
        <position position="474"/>
    </location>
</feature>
<feature type="glycosylation site" description="N-linked (GlcNAc...) asparagine" evidence="4">
    <location>
        <position position="77"/>
    </location>
</feature>
<feature type="glycosylation site" description="N-linked (GlcNAc...) asparagine" evidence="4">
    <location>
        <position position="458"/>
    </location>
</feature>
<feature type="splice variant" id="VSP_025715" description="In isoform 2." evidence="6">
    <original>SKTALSTISD</original>
    <variation>N</variation>
    <location>
        <begin position="79"/>
        <end position="88"/>
    </location>
</feature>
<feature type="sequence conflict" description="In Ref. 2; BAE37301." evidence="7" ref="2">
    <original>F</original>
    <variation>S</variation>
    <location>
        <position position="487"/>
    </location>
</feature>
<feature type="sequence conflict" description="In Ref. 2; BAE37301." evidence="7" ref="2">
    <original>G</original>
    <variation>A</variation>
    <location>
        <position position="504"/>
    </location>
</feature>
<feature type="sequence conflict" description="In Ref. 2; BAE37301." evidence="7" ref="2">
    <original>W</original>
    <variation>R</variation>
    <location>
        <position position="522"/>
    </location>
</feature>
<feature type="strand" evidence="10">
    <location>
        <begin position="394"/>
        <end position="400"/>
    </location>
</feature>
<feature type="helix" evidence="10">
    <location>
        <begin position="408"/>
        <end position="412"/>
    </location>
</feature>
<feature type="strand" evidence="10">
    <location>
        <begin position="418"/>
        <end position="422"/>
    </location>
</feature>
<feature type="strand" evidence="10">
    <location>
        <begin position="428"/>
        <end position="437"/>
    </location>
</feature>
<feature type="strand" evidence="10">
    <location>
        <begin position="439"/>
        <end position="446"/>
    </location>
</feature>
<feature type="strand" evidence="10">
    <location>
        <begin position="458"/>
        <end position="466"/>
    </location>
</feature>
<feature type="helix" evidence="10">
    <location>
        <begin position="478"/>
        <end position="480"/>
    </location>
</feature>
<feature type="strand" evidence="10">
    <location>
        <begin position="487"/>
        <end position="491"/>
    </location>
</feature>
<feature type="strand" evidence="10">
    <location>
        <begin position="496"/>
        <end position="500"/>
    </location>
</feature>
<feature type="helix" evidence="10">
    <location>
        <begin position="503"/>
        <end position="505"/>
    </location>
</feature>
<feature type="strand" evidence="10">
    <location>
        <begin position="507"/>
        <end position="515"/>
    </location>
</feature>
<feature type="strand" evidence="10">
    <location>
        <begin position="522"/>
        <end position="532"/>
    </location>
</feature>
<protein>
    <recommendedName>
        <fullName evidence="7">Alpha-1,3-mannosyl-glycoprotein 4-beta-N-acetylglucosaminyltransferase A</fullName>
        <ecNumber evidence="5">2.4.1.145</ecNumber>
    </recommendedName>
    <alternativeName>
        <fullName>N-glycosyl-oligosaccharide-glycoprotein N-acetylglucosaminyltransferase IVa</fullName>
        <shortName>GlcNAc-T IVa</shortName>
        <shortName>GnT-IVa</shortName>
        <shortName>N-acetylglucosaminyltransferase IVa</shortName>
    </alternativeName>
    <alternativeName>
        <fullName>UDP-N-acetylglucosamine: alpha-1,3-D-mannoside beta-1,4-N-acetylglucosaminyltransferase IVa</fullName>
    </alternativeName>
    <component>
        <recommendedName>
            <fullName>Alpha-1,3-mannosyl-glycoprotein 4-beta-N-acetylglucosaminyltransferase A soluble form</fullName>
        </recommendedName>
    </component>
</protein>